<keyword id="KW-0521">NADP</keyword>
<keyword id="KW-0560">Oxidoreductase</keyword>
<keyword id="KW-1185">Reference proteome</keyword>
<reference key="1">
    <citation type="journal article" date="1994" name="Mol. Microbiol.">
        <title>Altered intracellular targeting properties associated with mutations in the Legionella pneumophila dotA gene.</title>
        <authorList>
            <person name="Berger K.H."/>
            <person name="Merriam J.J."/>
            <person name="Isberg R.R."/>
        </authorList>
    </citation>
    <scope>NUCLEOTIDE SEQUENCE [GENOMIC DNA]</scope>
</reference>
<reference key="2">
    <citation type="journal article" date="2004" name="Science">
        <title>The genomic sequence of the accidental pathogen Legionella pneumophila.</title>
        <authorList>
            <person name="Chien M."/>
            <person name="Morozova I."/>
            <person name="Shi S."/>
            <person name="Sheng H."/>
            <person name="Chen J."/>
            <person name="Gomez S.M."/>
            <person name="Asamani G."/>
            <person name="Hill K."/>
            <person name="Nuara J."/>
            <person name="Feder M."/>
            <person name="Rineer J."/>
            <person name="Greenberg J.J."/>
            <person name="Steshenko V."/>
            <person name="Park S.H."/>
            <person name="Zhao B."/>
            <person name="Teplitskaya E."/>
            <person name="Edwards J.R."/>
            <person name="Pampou S."/>
            <person name="Georghiou A."/>
            <person name="Chou I.-C."/>
            <person name="Iannuccilli W."/>
            <person name="Ulz M.E."/>
            <person name="Kim D.H."/>
            <person name="Geringer-Sameth A."/>
            <person name="Goldsberry C."/>
            <person name="Morozov P."/>
            <person name="Fischer S.G."/>
            <person name="Segal G."/>
            <person name="Qu X."/>
            <person name="Rzhetsky A."/>
            <person name="Zhang P."/>
            <person name="Cayanis E."/>
            <person name="De Jong P.J."/>
            <person name="Ju J."/>
            <person name="Kalachikov S."/>
            <person name="Shuman H.A."/>
            <person name="Russo J.J."/>
        </authorList>
    </citation>
    <scope>NUCLEOTIDE SEQUENCE [LARGE SCALE GENOMIC DNA]</scope>
    <source>
        <strain>Philadelphia 1 / ATCC 33152 / DSM 7513</strain>
    </source>
</reference>
<sequence length="615" mass="67705">MKSTDPIKIAVLPGDGIGIEVTEATLPVFEVLDVPVILNYGDIGWEFWKKEGAAIPSRTWQLIASSDTVLLGAITSKPQREAKQELSNALKKSNPYYVSPVIQLRQGLDLFANVRPCFSIDDQSKPFNFCIIRENSEGLYCGFDYFPLPKAIHSLLAESQHWQTIPADEASCALRLQSKSGLTRLFDFAFKHAMQTGMPRVTLADKPNVLRESGEFTRKIFESTAQRYPKIQADILNVDAVALWLIKSPEKFGVIVAENMFGDILSDVGAGVMGGLGLAPSANIGDKGSYFEPVHGSGPRIRKNCANPSAMFLTISMLLNHFGYPDRAKKIVNAVMQVIKEKRFITYDLGGHATTTDMANAVIEHCARLNASCLSKDFNPTPKENLIESDTMPNLLQQLINCNSAEISDALDACGIEGGLLSIKPLSQGMKIIGPAYTIQYLPREKKGTAFHNAANYIDKVPKHSVIVIDNNGQIDCTVWGDLLTHTALRNNIMGTVVHGAVRDVESIRSTNYPVFCTGIYMCSGKNRVYKANEQCPLSINGVTINPGDIIFADDNGVLVIPNDRLQEVVNKTIAIRLTEERIKTAIASGSTLEQAREDYCYEQPWLGINKKRES</sequence>
<evidence type="ECO:0000305" key="1"/>
<gene>
    <name type="primary">dlpA</name>
    <name type="ordered locus">lpg2683</name>
</gene>
<organism>
    <name type="scientific">Legionella pneumophila subsp. pneumophila (strain Philadelphia 1 / ATCC 33152 / DSM 7513)</name>
    <dbReference type="NCBI Taxonomy" id="272624"/>
    <lineage>
        <taxon>Bacteria</taxon>
        <taxon>Pseudomonadati</taxon>
        <taxon>Pseudomonadota</taxon>
        <taxon>Gammaproteobacteria</taxon>
        <taxon>Legionellales</taxon>
        <taxon>Legionellaceae</taxon>
        <taxon>Legionella</taxon>
    </lineage>
</organism>
<proteinExistence type="inferred from homology"/>
<dbReference type="EMBL" id="U07940">
    <property type="protein sequence ID" value="AAA79904.1"/>
    <property type="molecule type" value="Genomic_DNA"/>
</dbReference>
<dbReference type="EMBL" id="AE017354">
    <property type="protein sequence ID" value="AAU28741.1"/>
    <property type="molecule type" value="Genomic_DNA"/>
</dbReference>
<dbReference type="PIR" id="S61390">
    <property type="entry name" value="S61390"/>
</dbReference>
<dbReference type="RefSeq" id="WP_010948383.1">
    <property type="nucleotide sequence ID" value="NC_002942.5"/>
</dbReference>
<dbReference type="RefSeq" id="YP_096688.1">
    <property type="nucleotide sequence ID" value="NC_002942.5"/>
</dbReference>
<dbReference type="SMR" id="Q48806"/>
<dbReference type="STRING" id="272624.lpg2683"/>
<dbReference type="PaxDb" id="272624-lpg2683"/>
<dbReference type="KEGG" id="lpn:lpg2683"/>
<dbReference type="PATRIC" id="fig|272624.6.peg.2864"/>
<dbReference type="eggNOG" id="COG0473">
    <property type="taxonomic scope" value="Bacteria"/>
</dbReference>
<dbReference type="eggNOG" id="COG0684">
    <property type="taxonomic scope" value="Bacteria"/>
</dbReference>
<dbReference type="HOGENOM" id="CLU_444666_0_0_6"/>
<dbReference type="OrthoDB" id="9812532at2"/>
<dbReference type="Proteomes" id="UP000000609">
    <property type="component" value="Chromosome"/>
</dbReference>
<dbReference type="GO" id="GO:0004449">
    <property type="term" value="F:isocitrate dehydrogenase (NAD+) activity"/>
    <property type="evidence" value="ECO:0007669"/>
    <property type="project" value="TreeGrafter"/>
</dbReference>
<dbReference type="GO" id="GO:0000287">
    <property type="term" value="F:magnesium ion binding"/>
    <property type="evidence" value="ECO:0007669"/>
    <property type="project" value="InterPro"/>
</dbReference>
<dbReference type="GO" id="GO:0051287">
    <property type="term" value="F:NAD binding"/>
    <property type="evidence" value="ECO:0007669"/>
    <property type="project" value="InterPro"/>
</dbReference>
<dbReference type="GO" id="GO:0006102">
    <property type="term" value="P:isocitrate metabolic process"/>
    <property type="evidence" value="ECO:0007669"/>
    <property type="project" value="TreeGrafter"/>
</dbReference>
<dbReference type="GO" id="GO:0006099">
    <property type="term" value="P:tricarboxylic acid cycle"/>
    <property type="evidence" value="ECO:0007669"/>
    <property type="project" value="TreeGrafter"/>
</dbReference>
<dbReference type="CDD" id="cd16841">
    <property type="entry name" value="RraA_family"/>
    <property type="match status" value="1"/>
</dbReference>
<dbReference type="Gene3D" id="1.20.5.3070">
    <property type="match status" value="1"/>
</dbReference>
<dbReference type="Gene3D" id="3.40.718.10">
    <property type="entry name" value="Isopropylmalate Dehydrogenase"/>
    <property type="match status" value="1"/>
</dbReference>
<dbReference type="Gene3D" id="3.50.30.40">
    <property type="entry name" value="Ribonuclease E inhibitor RraA/RraA-like"/>
    <property type="match status" value="1"/>
</dbReference>
<dbReference type="InterPro" id="IPR019818">
    <property type="entry name" value="IsoCit/isopropylmalate_DH_CS"/>
</dbReference>
<dbReference type="InterPro" id="IPR024084">
    <property type="entry name" value="IsoPropMal-DH-like_dom"/>
</dbReference>
<dbReference type="InterPro" id="IPR005493">
    <property type="entry name" value="RraA/RraA-like"/>
</dbReference>
<dbReference type="InterPro" id="IPR036704">
    <property type="entry name" value="RraA/RraA-like_sf"/>
</dbReference>
<dbReference type="PANTHER" id="PTHR11835">
    <property type="entry name" value="DECARBOXYLATING DEHYDROGENASES-ISOCITRATE, ISOPROPYLMALATE, TARTRATE"/>
    <property type="match status" value="1"/>
</dbReference>
<dbReference type="PANTHER" id="PTHR11835:SF34">
    <property type="entry name" value="ISOCITRATE DEHYDROGENASE [NAD] SUBUNIT ALPHA, MITOCHONDRIAL"/>
    <property type="match status" value="1"/>
</dbReference>
<dbReference type="Pfam" id="PF00180">
    <property type="entry name" value="Iso_dh"/>
    <property type="match status" value="1"/>
</dbReference>
<dbReference type="Pfam" id="PF03737">
    <property type="entry name" value="RraA-like"/>
    <property type="match status" value="1"/>
</dbReference>
<dbReference type="SMART" id="SM01329">
    <property type="entry name" value="Iso_dh"/>
    <property type="match status" value="1"/>
</dbReference>
<dbReference type="SUPFAM" id="SSF53659">
    <property type="entry name" value="Isocitrate/Isopropylmalate dehydrogenase-like"/>
    <property type="match status" value="1"/>
</dbReference>
<dbReference type="SUPFAM" id="SSF89562">
    <property type="entry name" value="RraA-like"/>
    <property type="match status" value="1"/>
</dbReference>
<dbReference type="PROSITE" id="PS00470">
    <property type="entry name" value="IDH_IMDH"/>
    <property type="match status" value="1"/>
</dbReference>
<accession>Q48806</accession>
<accession>Q5ZS36</accession>
<comment type="similarity">
    <text evidence="1">Belongs to the isocitrate and isopropylmalate dehydrogenases family.</text>
</comment>
<comment type="similarity">
    <text evidence="1">To M.jannaschii MJ0644 in the C-terminal section.</text>
</comment>
<name>DLPA_LEGPH</name>
<feature type="chain" id="PRO_0000083821" description="Protein DlpA">
    <location>
        <begin position="1"/>
        <end position="615"/>
    </location>
</feature>
<protein>
    <recommendedName>
        <fullName>Protein DlpA</fullName>
    </recommendedName>
</protein>